<proteinExistence type="evidence at protein level"/>
<comment type="function">
    <text evidence="1 8 9 11">Plays an important role in caveolae formation and organization. Essential for the formation of caveolae in all tissues (PubMed:18056712, PubMed:18191225, PubMed:19726876). Core component of the CAVIN complex which is essential for recruitment of the complex to the caveolae in presence of calveolin-1 (CAV1). Essential for normal oligomerization of CAV1. Promotes ribosomal transcriptional activity in response to metabolic challenges in the adipocytes and plays an important role in the formation of the ribosomal transcriptional loop. Dissociates transcription complexes paused by DNA-bound TTF1, thereby releasing both RNA polymerase I and pre-RNA from the template (By similarity) (PubMed:18056712, PubMed:18191225, PubMed:19726876). The caveolae biogenesis pathway is required for the secretion of proteins such as GASK1A (By similarity).</text>
</comment>
<comment type="subunit">
    <text evidence="1 7 10 13 14">Component of the CAVIN complex composed of CAVIN1, CAVIN2, CAVIN3 and CAVIN4. Homotrimer (By similarity). Interacts with TTF1 (PubMed:9582279). Interacts with RNA polymerase I subunit POLR1A/RPA1. Binds the 3' end of pre-rRNA. Interacts with transcription factor ZNF148 (By similarity). Interacts with LIPE in the adipocyte cytoplasm (PubMed:17026959). Interacts with CAV1 and CAVIN3 (By similarity). Interacts with CAVIN2 (PubMed:19525939, PubMed:24567387). Interacts with CAVIN4 and CAV3 (PubMed:24567387).</text>
</comment>
<comment type="interaction">
    <interactant intactId="EBI-2559016">
        <id>Q6NZI2</id>
    </interactant>
    <interactant intactId="EBI-603614">
        <id>Q03135</id>
        <label>CAV1</label>
    </interactant>
    <organismsDiffer>false</organismsDiffer>
    <experiments>10</experiments>
</comment>
<comment type="interaction">
    <interactant intactId="EBI-2559016">
        <id>Q6NZI2</id>
    </interactant>
    <interactant intactId="EBI-3905936">
        <id>P56539</id>
        <label>CAV3</label>
    </interactant>
    <organismsDiffer>false</organismsDiffer>
    <experiments>4</experiments>
</comment>
<comment type="interaction">
    <interactant intactId="EBI-2559016">
        <id>Q6NZI2</id>
    </interactant>
    <interactant intactId="EBI-2559016">
        <id>Q6NZI2</id>
        <label>CAVIN1</label>
    </interactant>
    <organismsDiffer>false</organismsDiffer>
    <experiments>5</experiments>
</comment>
<comment type="interaction">
    <interactant intactId="EBI-2559016">
        <id>Q6NZI2</id>
    </interactant>
    <interactant intactId="EBI-742141">
        <id>O95810</id>
        <label>CAVIN2</label>
    </interactant>
    <organismsDiffer>false</organismsDiffer>
    <experiments>6</experiments>
</comment>
<comment type="interaction">
    <interactant intactId="EBI-2559016">
        <id>Q6NZI2</id>
    </interactant>
    <interactant intactId="EBI-3893101">
        <id>Q969G5</id>
        <label>CAVIN3</label>
    </interactant>
    <organismsDiffer>false</organismsDiffer>
    <experiments>12</experiments>
</comment>
<comment type="interaction">
    <interactant intactId="EBI-2559016">
        <id>Q6NZI2</id>
    </interactant>
    <interactant intactId="EBI-295634">
        <id>Q16543</id>
        <label>CDC37</label>
    </interactant>
    <organismsDiffer>false</organismsDiffer>
    <experiments>3</experiments>
</comment>
<comment type="interaction">
    <interactant intactId="EBI-2559016">
        <id>Q6NZI2</id>
    </interactant>
    <interactant intactId="EBI-5278764">
        <id>Q96GN5</id>
        <label>CDCA7L</label>
    </interactant>
    <organismsDiffer>false</organismsDiffer>
    <experiments>3</experiments>
</comment>
<comment type="interaction">
    <interactant intactId="EBI-2559016">
        <id>Q6NZI2</id>
    </interactant>
    <interactant intactId="EBI-5666736">
        <id>Q5QJE6</id>
        <label>DNTTIP2</label>
    </interactant>
    <organismsDiffer>false</organismsDiffer>
    <experiments>3</experiments>
</comment>
<comment type="interaction">
    <interactant intactId="EBI-2559016">
        <id>Q6NZI2</id>
    </interactant>
    <interactant intactId="EBI-740282">
        <id>Q9NVF7</id>
        <label>FBXO28</label>
    </interactant>
    <organismsDiffer>false</organismsDiffer>
    <experiments>5</experiments>
</comment>
<comment type="interaction">
    <interactant intactId="EBI-2559016">
        <id>Q6NZI2</id>
    </interactant>
    <interactant intactId="EBI-715611">
        <id>Q9C086</id>
        <label>INO80B</label>
    </interactant>
    <organismsDiffer>false</organismsDiffer>
    <experiments>3</experiments>
</comment>
<comment type="interaction">
    <interactant intactId="EBI-2559016">
        <id>Q6NZI2</id>
    </interactant>
    <interactant intactId="EBI-399080">
        <id>Q92993</id>
        <label>KAT5</label>
    </interactant>
    <organismsDiffer>false</organismsDiffer>
    <experiments>3</experiments>
</comment>
<comment type="interaction">
    <interactant intactId="EBI-2559016">
        <id>Q6NZI2</id>
    </interactant>
    <interactant intactId="EBI-2514313">
        <id>Q9BRJ2</id>
        <label>MRPL45</label>
    </interactant>
    <organismsDiffer>false</organismsDiffer>
    <experiments>3</experiments>
</comment>
<comment type="interaction">
    <interactant intactId="EBI-2559016">
        <id>Q6NZI2</id>
    </interactant>
    <interactant intactId="EBI-12023934">
        <id>Q5MJ10</id>
        <label>SPANXN2</label>
    </interactant>
    <organismsDiffer>false</organismsDiffer>
    <experiments>4</experiments>
</comment>
<comment type="interaction">
    <interactant intactId="EBI-2559016">
        <id>Q6NZI2</id>
    </interactant>
    <interactant intactId="EBI-12037215">
        <id>Q5MJ09</id>
        <label>SPANXN3</label>
    </interactant>
    <organismsDiffer>false</organismsDiffer>
    <experiments>3</experiments>
</comment>
<comment type="interaction">
    <interactant intactId="EBI-2559016">
        <id>Q6NZI2</id>
    </interactant>
    <interactant intactId="EBI-752102">
        <id>Q8WVP5</id>
        <label>TNFAIP8L1</label>
    </interactant>
    <organismsDiffer>false</organismsDiffer>
    <experiments>3</experiments>
</comment>
<comment type="interaction">
    <interactant intactId="EBI-2559016">
        <id>Q6NZI2</id>
    </interactant>
    <interactant intactId="EBI-10241197">
        <id>Q3SY00</id>
        <label>TSGA10IP</label>
    </interactant>
    <organismsDiffer>false</organismsDiffer>
    <experiments>3</experiments>
</comment>
<comment type="interaction">
    <interactant intactId="EBI-2559016">
        <id>Q6NZI2</id>
    </interactant>
    <interactant intactId="EBI-9526213">
        <id>Q8N0Z6</id>
        <label>TTC5</label>
    </interactant>
    <organismsDiffer>false</organismsDiffer>
    <experiments>3</experiments>
</comment>
<comment type="interaction">
    <interactant intactId="EBI-2559016">
        <id>Q6NZI2</id>
    </interactant>
    <interactant intactId="EBI-12111538">
        <id>Q8IY57-5</id>
        <label>YAF2</label>
    </interactant>
    <organismsDiffer>false</organismsDiffer>
    <experiments>3</experiments>
</comment>
<comment type="interaction">
    <interactant intactId="EBI-2559016">
        <id>Q6NZI2</id>
    </interactant>
    <interactant intactId="EBI-597063">
        <id>Q8TBK6</id>
        <label>ZCCHC10</label>
    </interactant>
    <organismsDiffer>false</organismsDiffer>
    <experiments>4</experiments>
</comment>
<comment type="interaction">
    <interactant intactId="EBI-2559016">
        <id>Q6NZI2</id>
    </interactant>
    <interactant intactId="EBI-2555749">
        <id>Q6P2D0</id>
        <label>ZFP1</label>
    </interactant>
    <organismsDiffer>false</organismsDiffer>
    <experiments>3</experiments>
</comment>
<comment type="interaction">
    <interactant intactId="EBI-2559016">
        <id>Q6NZI2</id>
    </interactant>
    <interactant intactId="EBI-10281938">
        <id>Q9Y5A6</id>
        <label>ZSCAN21</label>
    </interactant>
    <organismsDiffer>false</organismsDiffer>
    <experiments>3</experiments>
</comment>
<comment type="subcellular location">
    <subcellularLocation>
        <location evidence="5 8 10">Membrane</location>
        <location evidence="5 8 10">Caveola</location>
    </subcellularLocation>
    <subcellularLocation>
        <location evidence="5 7 8">Cell membrane</location>
    </subcellularLocation>
    <subcellularLocation>
        <location evidence="5 7">Microsome</location>
    </subcellularLocation>
    <subcellularLocation>
        <location evidence="2">Endoplasmic reticulum</location>
    </subcellularLocation>
    <subcellularLocation>
        <location evidence="5">Cytoplasm</location>
        <location evidence="5">Cytosol</location>
    </subcellularLocation>
    <subcellularLocation>
        <location evidence="5 7">Mitochondrion</location>
    </subcellularLocation>
    <subcellularLocation>
        <location evidence="5 7">Nucleus</location>
    </subcellularLocation>
    <text evidence="1 7">Translocates to the cytoplasm from the caveolae upon insulin stimulation (PubMed:17026959). Colocalizes with CAV1 in lipid rafts in adipocytes. Localizes in the caveolae in a caveolin-dependent manner (By similarity).</text>
</comment>
<comment type="alternative products">
    <event type="alternative splicing"/>
    <isoform>
        <id>Q6NZI2-1</id>
        <name evidence="16">1</name>
        <sequence type="displayed"/>
    </isoform>
    <isoform>
        <id>Q6NZI2-2</id>
        <name evidence="16">2</name>
        <sequence type="described" ref="VSP_051625"/>
    </isoform>
    <isoform>
        <id>Q6NZI2-3</id>
        <name evidence="16">3</name>
        <sequence type="described" ref="VSP_051624"/>
    </isoform>
</comment>
<comment type="domain">
    <text evidence="1">The leucine-zipper domain 1 is essential for its localization in the caveolae.</text>
</comment>
<comment type="PTM">
    <text evidence="1">Phosphorylated. Present in active and inactive forms. Changes in phosphorylation pattern may alter activity. Phosphorylation at Tyr-156 is essential for its functionin the regulation of ribosomal transcriptional activity.</text>
</comment>
<comment type="PTM">
    <text evidence="5">Five truncated forms are found in the caveolae. These are thought to be the result of proteolysis and may be phosphorylation-dependent.</text>
</comment>
<comment type="PTM">
    <text evidence="1">Monoubiquitinated.</text>
</comment>
<comment type="disease" evidence="11 12">
    <disease id="DI-02767">
        <name>Lipodystrophy, congenital generalized, 4</name>
        <acronym>CGL4</acronym>
        <description>A form of congenital generalized lipodystrophy, a metabolic disorder characterized by a near complete absence of adipose tissue, extreme insulin resistance, hypertriglyceridemia, hepatic steatosis and diabetes mellitus. CGL4 is characterized by the association of congenital generalized lipodystrophy with muscular dystrophy and cardiac anomalies. Inheritance is autosomal recessive.</description>
        <dbReference type="MIM" id="613327"/>
    </disease>
    <text>The disease is caused by variants affecting the gene represented in this entry.</text>
</comment>
<comment type="similarity">
    <text evidence="16">Belongs to the CAVIN family.</text>
</comment>
<gene>
    <name evidence="22" type="primary">CAVIN1</name>
    <name type="synonym">PTRF</name>
    <name type="ORF">FKSG13</name>
</gene>
<keyword id="KW-0002">3D-structure</keyword>
<keyword id="KW-0007">Acetylation</keyword>
<keyword id="KW-0025">Alternative splicing</keyword>
<keyword id="KW-1003">Cell membrane</keyword>
<keyword id="KW-0175">Coiled coil</keyword>
<keyword id="KW-1022">Congenital generalized lipodystrophy</keyword>
<keyword id="KW-0963">Cytoplasm</keyword>
<keyword id="KW-0219">Diabetes mellitus</keyword>
<keyword id="KW-0903">Direct protein sequencing</keyword>
<keyword id="KW-0256">Endoplasmic reticulum</keyword>
<keyword id="KW-1017">Isopeptide bond</keyword>
<keyword id="KW-0472">Membrane</keyword>
<keyword id="KW-0492">Microsome</keyword>
<keyword id="KW-0496">Mitochondrion</keyword>
<keyword id="KW-0539">Nucleus</keyword>
<keyword id="KW-0597">Phosphoprotein</keyword>
<keyword id="KW-1267">Proteomics identification</keyword>
<keyword id="KW-1185">Reference proteome</keyword>
<keyword id="KW-0677">Repeat</keyword>
<keyword id="KW-0694">RNA-binding</keyword>
<keyword id="KW-0699">rRNA-binding</keyword>
<keyword id="KW-0804">Transcription</keyword>
<keyword id="KW-0805">Transcription regulation</keyword>
<keyword id="KW-0806">Transcription termination</keyword>
<keyword id="KW-0832">Ubl conjugation</keyword>
<accession>Q6NZI2</accession>
<accession>B2RAW7</accession>
<accession>O00535</accession>
<accession>Q6GMY1</accession>
<accession>Q96H74</accession>
<accession>Q9BT85</accession>
<accession>Q9HAP4</accession>
<evidence type="ECO:0000250" key="1">
    <source>
        <dbReference type="UniProtKB" id="O54724"/>
    </source>
</evidence>
<evidence type="ECO:0000250" key="2">
    <source>
        <dbReference type="UniProtKB" id="P85125"/>
    </source>
</evidence>
<evidence type="ECO:0000255" key="3"/>
<evidence type="ECO:0000256" key="4">
    <source>
        <dbReference type="SAM" id="MobiDB-lite"/>
    </source>
</evidence>
<evidence type="ECO:0000269" key="5">
    <source>
    </source>
</evidence>
<evidence type="ECO:0000269" key="6">
    <source>
    </source>
</evidence>
<evidence type="ECO:0000269" key="7">
    <source>
    </source>
</evidence>
<evidence type="ECO:0000269" key="8">
    <source>
    </source>
</evidence>
<evidence type="ECO:0000269" key="9">
    <source>
    </source>
</evidence>
<evidence type="ECO:0000269" key="10">
    <source>
    </source>
</evidence>
<evidence type="ECO:0000269" key="11">
    <source>
    </source>
</evidence>
<evidence type="ECO:0000269" key="12">
    <source>
    </source>
</evidence>
<evidence type="ECO:0000269" key="13">
    <source>
    </source>
</evidence>
<evidence type="ECO:0000269" key="14">
    <source>
    </source>
</evidence>
<evidence type="ECO:0000303" key="15">
    <source>
    </source>
</evidence>
<evidence type="ECO:0000305" key="16"/>
<evidence type="ECO:0000312" key="17">
    <source>
        <dbReference type="EMBL" id="AAC63404.1"/>
    </source>
</evidence>
<evidence type="ECO:0000312" key="18">
    <source>
        <dbReference type="EMBL" id="AAG27093.1"/>
    </source>
</evidence>
<evidence type="ECO:0000312" key="19">
    <source>
        <dbReference type="EMBL" id="AAH08849.1"/>
    </source>
</evidence>
<evidence type="ECO:0000312" key="20">
    <source>
        <dbReference type="EMBL" id="AAH66123.1"/>
    </source>
</evidence>
<evidence type="ECO:0000312" key="21">
    <source>
        <dbReference type="EMBL" id="AAH73759.1"/>
    </source>
</evidence>
<evidence type="ECO:0000312" key="22">
    <source>
        <dbReference type="HGNC" id="HGNC:9688"/>
    </source>
</evidence>
<evidence type="ECO:0007744" key="23">
    <source>
    </source>
</evidence>
<evidence type="ECO:0007744" key="24">
    <source>
    </source>
</evidence>
<evidence type="ECO:0007744" key="25">
    <source>
    </source>
</evidence>
<evidence type="ECO:0007744" key="26">
    <source>
    </source>
</evidence>
<evidence type="ECO:0007744" key="27">
    <source>
    </source>
</evidence>
<evidence type="ECO:0007744" key="28">
    <source>
    </source>
</evidence>
<evidence type="ECO:0007744" key="29">
    <source>
    </source>
</evidence>
<evidence type="ECO:0007744" key="30">
    <source>
    </source>
</evidence>
<evidence type="ECO:0007829" key="31">
    <source>
        <dbReference type="PDB" id="9EG6"/>
    </source>
</evidence>
<protein>
    <recommendedName>
        <fullName evidence="22">Caveolae-associated protein 1</fullName>
    </recommendedName>
    <alternativeName>
        <fullName>Cavin-1</fullName>
    </alternativeName>
    <alternativeName>
        <fullName>Polymerase I and transcript release factor</fullName>
    </alternativeName>
</protein>
<reference evidence="16 18" key="1">
    <citation type="submission" date="2000-10" db="EMBL/GenBank/DDBJ databases">
        <title>Cloning of FKSG13, a novel gene encoding a leucine-zipper protein.</title>
        <authorList>
            <person name="Wang Y.-G."/>
        </authorList>
    </citation>
    <scope>NUCLEOTIDE SEQUENCE [MRNA] (ISOFORM 1)</scope>
    <source>
        <tissue evidence="18">Lung</tissue>
    </source>
</reference>
<reference key="2">
    <citation type="journal article" date="2004" name="Nat. Genet.">
        <title>Complete sequencing and characterization of 21,243 full-length human cDNAs.</title>
        <authorList>
            <person name="Ota T."/>
            <person name="Suzuki Y."/>
            <person name="Nishikawa T."/>
            <person name="Otsuki T."/>
            <person name="Sugiyama T."/>
            <person name="Irie R."/>
            <person name="Wakamatsu A."/>
            <person name="Hayashi K."/>
            <person name="Sato H."/>
            <person name="Nagai K."/>
            <person name="Kimura K."/>
            <person name="Makita H."/>
            <person name="Sekine M."/>
            <person name="Obayashi M."/>
            <person name="Nishi T."/>
            <person name="Shibahara T."/>
            <person name="Tanaka T."/>
            <person name="Ishii S."/>
            <person name="Yamamoto J."/>
            <person name="Saito K."/>
            <person name="Kawai Y."/>
            <person name="Isono Y."/>
            <person name="Nakamura Y."/>
            <person name="Nagahari K."/>
            <person name="Murakami K."/>
            <person name="Yasuda T."/>
            <person name="Iwayanagi T."/>
            <person name="Wagatsuma M."/>
            <person name="Shiratori A."/>
            <person name="Sudo H."/>
            <person name="Hosoiri T."/>
            <person name="Kaku Y."/>
            <person name="Kodaira H."/>
            <person name="Kondo H."/>
            <person name="Sugawara M."/>
            <person name="Takahashi M."/>
            <person name="Kanda K."/>
            <person name="Yokoi T."/>
            <person name="Furuya T."/>
            <person name="Kikkawa E."/>
            <person name="Omura Y."/>
            <person name="Abe K."/>
            <person name="Kamihara K."/>
            <person name="Katsuta N."/>
            <person name="Sato K."/>
            <person name="Tanikawa M."/>
            <person name="Yamazaki M."/>
            <person name="Ninomiya K."/>
            <person name="Ishibashi T."/>
            <person name="Yamashita H."/>
            <person name="Murakawa K."/>
            <person name="Fujimori K."/>
            <person name="Tanai H."/>
            <person name="Kimata M."/>
            <person name="Watanabe M."/>
            <person name="Hiraoka S."/>
            <person name="Chiba Y."/>
            <person name="Ishida S."/>
            <person name="Ono Y."/>
            <person name="Takiguchi S."/>
            <person name="Watanabe S."/>
            <person name="Yosida M."/>
            <person name="Hotuta T."/>
            <person name="Kusano J."/>
            <person name="Kanehori K."/>
            <person name="Takahashi-Fujii A."/>
            <person name="Hara H."/>
            <person name="Tanase T.-O."/>
            <person name="Nomura Y."/>
            <person name="Togiya S."/>
            <person name="Komai F."/>
            <person name="Hara R."/>
            <person name="Takeuchi K."/>
            <person name="Arita M."/>
            <person name="Imose N."/>
            <person name="Musashino K."/>
            <person name="Yuuki H."/>
            <person name="Oshima A."/>
            <person name="Sasaki N."/>
            <person name="Aotsuka S."/>
            <person name="Yoshikawa Y."/>
            <person name="Matsunawa H."/>
            <person name="Ichihara T."/>
            <person name="Shiohata N."/>
            <person name="Sano S."/>
            <person name="Moriya S."/>
            <person name="Momiyama H."/>
            <person name="Satoh N."/>
            <person name="Takami S."/>
            <person name="Terashima Y."/>
            <person name="Suzuki O."/>
            <person name="Nakagawa S."/>
            <person name="Senoh A."/>
            <person name="Mizoguchi H."/>
            <person name="Goto Y."/>
            <person name="Shimizu F."/>
            <person name="Wakebe H."/>
            <person name="Hishigaki H."/>
            <person name="Watanabe T."/>
            <person name="Sugiyama A."/>
            <person name="Takemoto M."/>
            <person name="Kawakami B."/>
            <person name="Yamazaki M."/>
            <person name="Watanabe K."/>
            <person name="Kumagai A."/>
            <person name="Itakura S."/>
            <person name="Fukuzumi Y."/>
            <person name="Fujimori Y."/>
            <person name="Komiyama M."/>
            <person name="Tashiro H."/>
            <person name="Tanigami A."/>
            <person name="Fujiwara T."/>
            <person name="Ono T."/>
            <person name="Yamada K."/>
            <person name="Fujii Y."/>
            <person name="Ozaki K."/>
            <person name="Hirao M."/>
            <person name="Ohmori Y."/>
            <person name="Kawabata A."/>
            <person name="Hikiji T."/>
            <person name="Kobatake N."/>
            <person name="Inagaki H."/>
            <person name="Ikema Y."/>
            <person name="Okamoto S."/>
            <person name="Okitani R."/>
            <person name="Kawakami T."/>
            <person name="Noguchi S."/>
            <person name="Itoh T."/>
            <person name="Shigeta K."/>
            <person name="Senba T."/>
            <person name="Matsumura K."/>
            <person name="Nakajima Y."/>
            <person name="Mizuno T."/>
            <person name="Morinaga M."/>
            <person name="Sasaki M."/>
            <person name="Togashi T."/>
            <person name="Oyama M."/>
            <person name="Hata H."/>
            <person name="Watanabe M."/>
            <person name="Komatsu T."/>
            <person name="Mizushima-Sugano J."/>
            <person name="Satoh T."/>
            <person name="Shirai Y."/>
            <person name="Takahashi Y."/>
            <person name="Nakagawa K."/>
            <person name="Okumura K."/>
            <person name="Nagase T."/>
            <person name="Nomura N."/>
            <person name="Kikuchi H."/>
            <person name="Masuho Y."/>
            <person name="Yamashita R."/>
            <person name="Nakai K."/>
            <person name="Yada T."/>
            <person name="Nakamura Y."/>
            <person name="Ohara O."/>
            <person name="Isogai T."/>
            <person name="Sugano S."/>
        </authorList>
    </citation>
    <scope>NUCLEOTIDE SEQUENCE [LARGE SCALE MRNA] (ISOFORM 1)</scope>
    <source>
        <tissue>Placenta</tissue>
    </source>
</reference>
<reference evidence="16 18" key="3">
    <citation type="submission" date="2005-07" db="EMBL/GenBank/DDBJ databases">
        <authorList>
            <person name="Mural R.J."/>
            <person name="Istrail S."/>
            <person name="Sutton G.G."/>
            <person name="Florea L."/>
            <person name="Halpern A.L."/>
            <person name="Mobarry C.M."/>
            <person name="Lippert R."/>
            <person name="Walenz B."/>
            <person name="Shatkay H."/>
            <person name="Dew I."/>
            <person name="Miller J.R."/>
            <person name="Flanigan M.J."/>
            <person name="Edwards N.J."/>
            <person name="Bolanos R."/>
            <person name="Fasulo D."/>
            <person name="Halldorsson B.V."/>
            <person name="Hannenhalli S."/>
            <person name="Turner R."/>
            <person name="Yooseph S."/>
            <person name="Lu F."/>
            <person name="Nusskern D.R."/>
            <person name="Shue B.C."/>
            <person name="Zheng X.H."/>
            <person name="Zhong F."/>
            <person name="Delcher A.L."/>
            <person name="Huson D.H."/>
            <person name="Kravitz S.A."/>
            <person name="Mouchard L."/>
            <person name="Reinert K."/>
            <person name="Remington K.A."/>
            <person name="Clark A.G."/>
            <person name="Waterman M.S."/>
            <person name="Eichler E.E."/>
            <person name="Adams M.D."/>
            <person name="Hunkapiller M.W."/>
            <person name="Myers E.W."/>
            <person name="Venter J.C."/>
        </authorList>
    </citation>
    <scope>NUCLEOTIDE SEQUENCE [LARGE SCALE GENOMIC DNA]</scope>
</reference>
<reference evidence="16 20" key="4">
    <citation type="journal article" date="2004" name="Genome Res.">
        <title>The status, quality, and expansion of the NIH full-length cDNA project: the Mammalian Gene Collection (MGC).</title>
        <authorList>
            <consortium name="The MGC Project Team"/>
        </authorList>
    </citation>
    <scope>NUCLEOTIDE SEQUENCE [LARGE SCALE MRNA] (ISOFORMS 1; 2 AND 3)</scope>
    <source>
        <tissue evidence="19">Muscle</tissue>
        <tissue evidence="21">Pancreas</tissue>
        <tissue evidence="20">Testis</tissue>
    </source>
</reference>
<reference evidence="16 17" key="5">
    <citation type="journal article" date="1998" name="EMBO J.">
        <title>Cloning and functional characterization of PTRF, a novel protein which induces dissociation of paused ternary transcription complexes.</title>
        <authorList>
            <person name="Jansa P."/>
            <person name="Mason S.W."/>
            <person name="Hoffmann-Rohrer U."/>
            <person name="Grummt I."/>
        </authorList>
    </citation>
    <scope>NUCLEOTIDE SEQUENCE [MRNA] OF 187-390</scope>
    <scope>INTERACTION WITH TTF1</scope>
    <source>
        <tissue evidence="17">Lung</tissue>
    </source>
</reference>
<reference evidence="16" key="6">
    <citation type="journal article" date="2004" name="Biochem. J.">
        <title>Vectorial proteomics reveal targeting, phosphorylation and specific fragmentation of polymerase I and transcript release factor (PTRF) at the surface of caveolae in human adipocytes.</title>
        <authorList>
            <person name="Aboulaich N."/>
            <person name="Vainonen J.P."/>
            <person name="Stralfors P."/>
            <person name="Vener A.V."/>
        </authorList>
    </citation>
    <scope>PROTEIN SEQUENCE OF 1-95; 137-147; 153-165; 174-217; 299-310; 318-327; 338-355 AND 363-370 (ISOFORM 1)</scope>
    <scope>SUBCELLULAR LOCATION</scope>
    <scope>ACETYLATION AT MET-1</scope>
    <scope>PHOSPHORYLATION AT SER-36; SER-40; SER-365 AND SER-366</scope>
    <source>
        <tissue evidence="5">Adipocyte</tissue>
    </source>
</reference>
<reference evidence="16" key="7">
    <citation type="journal article" date="2006" name="Biochem. Biophys. Res. Commun.">
        <title>Association and insulin regulated translocation of hormone-sensitive lipase with PTRF.</title>
        <authorList>
            <person name="Aboulaich N."/>
            <person name="Oertegren U."/>
            <person name="Vener A.V."/>
            <person name="Stralfors P."/>
        </authorList>
    </citation>
    <scope>INTERACTION WITH LIPE</scope>
    <scope>SUBCELLULAR LOCATION</scope>
</reference>
<reference key="8">
    <citation type="journal article" date="2006" name="Cell">
        <title>Global, in vivo, and site-specific phosphorylation dynamics in signaling networks.</title>
        <authorList>
            <person name="Olsen J.V."/>
            <person name="Blagoev B."/>
            <person name="Gnad F."/>
            <person name="Macek B."/>
            <person name="Kumar C."/>
            <person name="Mortensen P."/>
            <person name="Mann M."/>
        </authorList>
    </citation>
    <scope>IDENTIFICATION BY MASS SPECTROMETRY [LARGE SCALE ANALYSIS]</scope>
    <source>
        <tissue>Cervix carcinoma</tissue>
    </source>
</reference>
<reference key="9">
    <citation type="journal article" date="2008" name="Cell">
        <title>PTRF-Cavin, a conserved cytoplasmic protein required for caveola formation and function.</title>
        <authorList>
            <person name="Hill M.M."/>
            <person name="Bastiani M."/>
            <person name="Luetterforst R."/>
            <person name="Kirkham M."/>
            <person name="Kirkham A."/>
            <person name="Nixon S.J."/>
            <person name="Walser P."/>
            <person name="Abankwa D."/>
            <person name="Oorschot V.M."/>
            <person name="Martin S."/>
            <person name="Hancock J.F."/>
            <person name="Parton R.G."/>
        </authorList>
    </citation>
    <scope>FUNCTION</scope>
</reference>
<reference key="10">
    <citation type="journal article" date="2008" name="J. Biol. Chem.">
        <title>A critical role of cavin (polymerase I and transcript release factor) in caveolae formation and organization.</title>
        <authorList>
            <person name="Liu L."/>
            <person name="Pilch P.F."/>
        </authorList>
    </citation>
    <scope>FUNCTION</scope>
    <scope>SUBCELLULAR LOCATION</scope>
</reference>
<reference key="11">
    <citation type="journal article" date="2008" name="J. Proteome Res.">
        <title>Combining protein-based IMAC, peptide-based IMAC, and MudPIT for efficient phosphoproteomic analysis.</title>
        <authorList>
            <person name="Cantin G.T."/>
            <person name="Yi W."/>
            <person name="Lu B."/>
            <person name="Park S.K."/>
            <person name="Xu T."/>
            <person name="Lee J.-D."/>
            <person name="Yates J.R. III"/>
        </authorList>
    </citation>
    <scope>IDENTIFICATION BY MASS SPECTROMETRY [LARGE SCALE ANALYSIS]</scope>
    <source>
        <tissue>Cervix carcinoma</tissue>
    </source>
</reference>
<reference key="12">
    <citation type="journal article" date="2008" name="Mol. Cell">
        <title>Kinase-selective enrichment enables quantitative phosphoproteomics of the kinome across the cell cycle.</title>
        <authorList>
            <person name="Daub H."/>
            <person name="Olsen J.V."/>
            <person name="Bairlein M."/>
            <person name="Gnad F."/>
            <person name="Oppermann F.S."/>
            <person name="Korner R."/>
            <person name="Greff Z."/>
            <person name="Keri G."/>
            <person name="Stemmann O."/>
            <person name="Mann M."/>
        </authorList>
    </citation>
    <scope>IDENTIFICATION BY MASS SPECTROMETRY [LARGE SCALE ANALYSIS]</scope>
    <source>
        <tissue>Cervix carcinoma</tissue>
    </source>
</reference>
<reference key="13">
    <citation type="journal article" date="2008" name="Proc. Natl. Acad. Sci. U.S.A.">
        <title>A quantitative atlas of mitotic phosphorylation.</title>
        <authorList>
            <person name="Dephoure N."/>
            <person name="Zhou C."/>
            <person name="Villen J."/>
            <person name="Beausoleil S.A."/>
            <person name="Bakalarski C.E."/>
            <person name="Elledge S.J."/>
            <person name="Gygi S.P."/>
        </authorList>
    </citation>
    <scope>PHOSPHORYLATION [LARGE SCALE ANALYSIS] AT SER-167; SER-202; SER-203; SER-300; THR-302; SER-365 AND SER-366</scope>
    <scope>IDENTIFICATION BY MASS SPECTROMETRY [LARGE SCALE ANALYSIS]</scope>
    <source>
        <tissue>Cervix carcinoma</tissue>
    </source>
</reference>
<reference key="14">
    <citation type="journal article" date="2009" name="J. Clin. Invest.">
        <title>Human PTRF mutations cause secondary deficiency of caveolins resulting in muscular dystrophy with generalized lipodystrophy.</title>
        <authorList>
            <person name="Hayashi Y.K."/>
            <person name="Matsuda C."/>
            <person name="Ogawa M."/>
            <person name="Goto K."/>
            <person name="Tominaga K."/>
            <person name="Mitsuhashi S."/>
            <person name="Park Y.E."/>
            <person name="Nonaka I."/>
            <person name="Hino-Fukuyo N."/>
            <person name="Haginoya K."/>
            <person name="Sugano H."/>
            <person name="Nishino I."/>
        </authorList>
    </citation>
    <scope>INVOLVEMENT IN CGL4</scope>
    <scope>FUNCTION</scope>
</reference>
<reference key="15">
    <citation type="journal article" date="2009" name="Nat. Cell Biol.">
        <title>SDPR induces membrane curvature and functions in the formation of caveolae.</title>
        <authorList>
            <person name="Hansen C.G."/>
            <person name="Bright N.A."/>
            <person name="Howard G."/>
            <person name="Nichols B.J."/>
        </authorList>
    </citation>
    <scope>SUBCELLULAR LOCATION</scope>
    <scope>INTERACTION WITH CAVIN2</scope>
</reference>
<reference key="16">
    <citation type="journal article" date="2010" name="Am. J. Med. Genet. A">
        <title>Congenital generalized lipodystrophy, type 4 (CGL4) associated with myopathy due to novel PTRF mutations.</title>
        <authorList>
            <person name="Shastry S."/>
            <person name="Delgado M.R."/>
            <person name="Dirik E."/>
            <person name="Turkmen M."/>
            <person name="Agarwal A.K."/>
            <person name="Garg A."/>
        </authorList>
    </citation>
    <scope>INVOLVEMENT IN CGL4</scope>
</reference>
<reference key="17">
    <citation type="journal article" date="2010" name="Sci. Signal.">
        <title>Quantitative phosphoproteomics reveals widespread full phosphorylation site occupancy during mitosis.</title>
        <authorList>
            <person name="Olsen J.V."/>
            <person name="Vermeulen M."/>
            <person name="Santamaria A."/>
            <person name="Kumar C."/>
            <person name="Miller M.L."/>
            <person name="Jensen L.J."/>
            <person name="Gnad F."/>
            <person name="Cox J."/>
            <person name="Jensen T.S."/>
            <person name="Nigg E.A."/>
            <person name="Brunak S."/>
            <person name="Mann M."/>
        </authorList>
    </citation>
    <scope>PHOSPHORYLATION [LARGE SCALE ANALYSIS] AT SER-167; SER-202; SER-203; THR-302; SER-365; SER-366; SER-387 AND SER-389</scope>
    <scope>IDENTIFICATION BY MASS SPECTROMETRY [LARGE SCALE ANALYSIS]</scope>
    <source>
        <tissue>Cervix carcinoma</tissue>
    </source>
</reference>
<reference key="18">
    <citation type="journal article" date="2011" name="BMC Syst. Biol.">
        <title>Initial characterization of the human central proteome.</title>
        <authorList>
            <person name="Burkard T.R."/>
            <person name="Planyavsky M."/>
            <person name="Kaupe I."/>
            <person name="Breitwieser F.P."/>
            <person name="Buerckstuemmer T."/>
            <person name="Bennett K.L."/>
            <person name="Superti-Furga G."/>
            <person name="Colinge J."/>
        </authorList>
    </citation>
    <scope>IDENTIFICATION BY MASS SPECTROMETRY [LARGE SCALE ANALYSIS]</scope>
</reference>
<reference key="19">
    <citation type="journal article" date="2011" name="Sci. Signal.">
        <title>System-wide temporal characterization of the proteome and phosphoproteome of human embryonic stem cell differentiation.</title>
        <authorList>
            <person name="Rigbolt K.T."/>
            <person name="Prokhorova T.A."/>
            <person name="Akimov V."/>
            <person name="Henningsen J."/>
            <person name="Johansen P.T."/>
            <person name="Kratchmarova I."/>
            <person name="Kassem M."/>
            <person name="Mann M."/>
            <person name="Olsen J.V."/>
            <person name="Blagoev B."/>
        </authorList>
    </citation>
    <scope>PHOSPHORYLATION [LARGE SCALE ANALYSIS] AT SER-202; SER-203; SER-365; SER-366; SER-387 AND SER-389</scope>
    <scope>IDENTIFICATION BY MASS SPECTROMETRY [LARGE SCALE ANALYSIS]</scope>
</reference>
<reference key="20">
    <citation type="journal article" date="2013" name="J. Proteome Res.">
        <title>Toward a comprehensive characterization of a human cancer cell phosphoproteome.</title>
        <authorList>
            <person name="Zhou H."/>
            <person name="Di Palma S."/>
            <person name="Preisinger C."/>
            <person name="Peng M."/>
            <person name="Polat A.N."/>
            <person name="Heck A.J."/>
            <person name="Mohammed S."/>
        </authorList>
    </citation>
    <scope>PHOSPHORYLATION [LARGE SCALE ANALYSIS] AT SER-167; SER-300; THR-302 AND TYR-308</scope>
    <scope>IDENTIFICATION BY MASS SPECTROMETRY [LARGE SCALE ANALYSIS]</scope>
    <source>
        <tissue>Cervix carcinoma</tissue>
        <tissue>Erythroleukemia</tissue>
    </source>
</reference>
<reference key="21">
    <citation type="journal article" date="2014" name="J. Proteomics">
        <title>An enzyme assisted RP-RPLC approach for in-depth analysis of human liver phosphoproteome.</title>
        <authorList>
            <person name="Bian Y."/>
            <person name="Song C."/>
            <person name="Cheng K."/>
            <person name="Dong M."/>
            <person name="Wang F."/>
            <person name="Huang J."/>
            <person name="Sun D."/>
            <person name="Wang L."/>
            <person name="Ye M."/>
            <person name="Zou H."/>
        </authorList>
    </citation>
    <scope>PHOSPHORYLATION [LARGE SCALE ANALYSIS] AT SER-118; SER-169; SER-202; SER-203; SER-365; SER-366; SER-379; SER-387 AND SER-389</scope>
    <scope>IDENTIFICATION BY MASS SPECTROMETRY [LARGE SCALE ANALYSIS]</scope>
    <source>
        <tissue>Liver</tissue>
    </source>
</reference>
<reference key="22">
    <citation type="journal article" date="2014" name="Nat. Struct. Mol. Biol.">
        <title>Uncovering global SUMOylation signaling networks in a site-specific manner.</title>
        <authorList>
            <person name="Hendriks I.A."/>
            <person name="D'Souza R.C."/>
            <person name="Yang B."/>
            <person name="Verlaan-de Vries M."/>
            <person name="Mann M."/>
            <person name="Vertegaal A.C."/>
        </authorList>
    </citation>
    <scope>SUMOYLATION [LARGE SCALE ANALYSIS] AT LYS-116 AND LYS-161</scope>
    <scope>IDENTIFICATION BY MASS SPECTROMETRY [LARGE SCALE ANALYSIS]</scope>
</reference>
<reference key="23">
    <citation type="journal article" date="2014" name="Proc. Natl. Acad. Sci. U.S.A.">
        <title>Mapping of SUMO sites and analysis of SUMOylation changes induced by external stimuli.</title>
        <authorList>
            <person name="Impens F."/>
            <person name="Radoshevich L."/>
            <person name="Cossart P."/>
            <person name="Ribet D."/>
        </authorList>
    </citation>
    <scope>SUMOYLATION [LARGE SCALE ANALYSIS] AT LYS-161</scope>
    <scope>IDENTIFICATION BY MASS SPECTROMETRY [LARGE SCALE ANALYSIS]</scope>
</reference>
<reference key="24">
    <citation type="journal article" date="2014" name="Proc. Natl. Acad. Sci. U.S.A.">
        <title>MURC/Cavin-4 facilitates recruitment of ERK to caveolae and concentric cardiac hypertrophy induced by alpha1-adrenergic receptors.</title>
        <authorList>
            <person name="Ogata T."/>
            <person name="Naito D."/>
            <person name="Nakanishi N."/>
            <person name="Hayashi Y.K."/>
            <person name="Taniguchi T."/>
            <person name="Miyagawa K."/>
            <person name="Hamaoka T."/>
            <person name="Maruyama N."/>
            <person name="Matoba S."/>
            <person name="Ikeda K."/>
            <person name="Yamada H."/>
            <person name="Oh H."/>
            <person name="Ueyama T."/>
        </authorList>
    </citation>
    <scope>INTERACTION WITH CAVIN2; CAVIN4 AND CAV3</scope>
</reference>
<reference key="25">
    <citation type="journal article" date="2015" name="Int. Rev. Cell Mol. Biol.">
        <title>Cavin family: new players in the biology of caveolae.</title>
        <authorList>
            <person name="Nassar Z.D."/>
            <person name="Parat M.O."/>
        </authorList>
    </citation>
    <scope>REVIEW</scope>
</reference>
<reference key="26">
    <citation type="journal article" date="2017" name="Nat. Struct. Mol. Biol.">
        <title>Site-specific mapping of the human SUMO proteome reveals co-modification with phosphorylation.</title>
        <authorList>
            <person name="Hendriks I.A."/>
            <person name="Lyon D."/>
            <person name="Young C."/>
            <person name="Jensen L.J."/>
            <person name="Vertegaal A.C."/>
            <person name="Nielsen M.L."/>
        </authorList>
    </citation>
    <scope>SUMOYLATION [LARGE SCALE ANALYSIS] AT LYS-116; LYS-122; LYS-161; LYS-165; LYS-170 AND LYS-326</scope>
    <scope>IDENTIFICATION BY MASS SPECTROMETRY [LARGE SCALE ANALYSIS]</scope>
</reference>
<reference key="27">
    <citation type="journal article" date="2006" name="Science">
        <title>The consensus coding sequences of human breast and colorectal cancers.</title>
        <authorList>
            <person name="Sjoeblom T."/>
            <person name="Jones S."/>
            <person name="Wood L.D."/>
            <person name="Parsons D.W."/>
            <person name="Lin J."/>
            <person name="Barber T.D."/>
            <person name="Mandelker D."/>
            <person name="Leary R.J."/>
            <person name="Ptak J."/>
            <person name="Silliman N."/>
            <person name="Szabo S."/>
            <person name="Buckhaults P."/>
            <person name="Farrell C."/>
            <person name="Meeh P."/>
            <person name="Markowitz S.D."/>
            <person name="Willis J."/>
            <person name="Dawson D."/>
            <person name="Willson J.K.V."/>
            <person name="Gazdar A.F."/>
            <person name="Hartigan J."/>
            <person name="Wu L."/>
            <person name="Liu C."/>
            <person name="Parmigiani G."/>
            <person name="Park B.H."/>
            <person name="Bachman K.E."/>
            <person name="Papadopoulos N."/>
            <person name="Vogelstein B."/>
            <person name="Kinzler K.W."/>
            <person name="Velculescu V.E."/>
        </authorList>
    </citation>
    <scope>VARIANT [LARGE SCALE ANALYSIS] THR-14</scope>
</reference>
<feature type="chain" id="PRO_0000097094" description="Caveolae-associated protein 1">
    <location>
        <begin position="1"/>
        <end position="390"/>
    </location>
</feature>
<feature type="region of interest" description="Required for homotrimerization and for interaction with CAVIN2 and CAVIN3" evidence="1">
    <location>
        <begin position="1"/>
        <end position="98"/>
    </location>
</feature>
<feature type="region of interest" description="Disordered" evidence="4">
    <location>
        <begin position="1"/>
        <end position="40"/>
    </location>
</feature>
<feature type="region of interest" description="Nuclear export signal" evidence="1">
    <location>
        <begin position="52"/>
        <end position="62"/>
    </location>
</feature>
<feature type="region of interest" description="Leucine-zipper 1" evidence="1">
    <location>
        <begin position="53"/>
        <end position="75"/>
    </location>
</feature>
<feature type="region of interest" description="Nuclear localization signal" evidence="1">
    <location>
        <begin position="136"/>
        <end position="152"/>
    </location>
</feature>
<feature type="region of interest" description="Leucine-zipper 2" evidence="1">
    <location>
        <begin position="166"/>
        <end position="186"/>
    </location>
</feature>
<feature type="region of interest" description="Disordered" evidence="4">
    <location>
        <begin position="172"/>
        <end position="201"/>
    </location>
</feature>
<feature type="region of interest" description="Nuclear localization signal" evidence="1">
    <location>
        <begin position="233"/>
        <end position="249"/>
    </location>
</feature>
<feature type="region of interest" description="Leucine-zipper 3" evidence="1">
    <location>
        <begin position="257"/>
        <end position="297"/>
    </location>
</feature>
<feature type="region of interest" description="Disordered" evidence="4">
    <location>
        <begin position="344"/>
        <end position="366"/>
    </location>
</feature>
<feature type="coiled-coil region" evidence="3">
    <location>
        <begin position="199"/>
        <end position="282"/>
    </location>
</feature>
<feature type="compositionally biased region" description="Low complexity" evidence="4">
    <location>
        <begin position="22"/>
        <end position="40"/>
    </location>
</feature>
<feature type="compositionally biased region" description="Basic and acidic residues" evidence="4">
    <location>
        <begin position="172"/>
        <end position="181"/>
    </location>
</feature>
<feature type="compositionally biased region" description="Acidic residues" evidence="4">
    <location>
        <begin position="182"/>
        <end position="201"/>
    </location>
</feature>
<feature type="compositionally biased region" description="Basic and acidic residues" evidence="4">
    <location>
        <begin position="352"/>
        <end position="365"/>
    </location>
</feature>
<feature type="modified residue" description="N-acetylmethionine" evidence="5">
    <location>
        <position position="1"/>
    </location>
</feature>
<feature type="modified residue" description="Phosphoserine" evidence="5">
    <location>
        <position position="36"/>
    </location>
</feature>
<feature type="modified residue" description="Phosphoserine" evidence="5">
    <location>
        <position position="40"/>
    </location>
</feature>
<feature type="modified residue" description="Phosphoserine" evidence="2">
    <location>
        <position position="46"/>
    </location>
</feature>
<feature type="modified residue" description="Phosphoserine" evidence="27">
    <location>
        <position position="118"/>
    </location>
</feature>
<feature type="modified residue" description="Phosphotyrosine" evidence="1">
    <location>
        <position position="156"/>
    </location>
</feature>
<feature type="modified residue" description="Phosphoserine" evidence="23 24 26">
    <location>
        <position position="167"/>
    </location>
</feature>
<feature type="modified residue" description="Phosphoserine" evidence="27">
    <location>
        <position position="169"/>
    </location>
</feature>
<feature type="modified residue" description="Phosphoserine" evidence="1">
    <location>
        <position position="171"/>
    </location>
</feature>
<feature type="modified residue" description="Phosphoserine" evidence="2">
    <location>
        <position position="175"/>
    </location>
</feature>
<feature type="modified residue" description="Phosphoserine" evidence="23 24 25 27">
    <location>
        <position position="202"/>
    </location>
</feature>
<feature type="modified residue" description="Phosphoserine" evidence="23 24 25 27">
    <location>
        <position position="203"/>
    </location>
</feature>
<feature type="modified residue" description="Phosphoserine" evidence="23 26">
    <location>
        <position position="300"/>
    </location>
</feature>
<feature type="modified residue" description="Phosphothreonine" evidence="23 24 26">
    <location>
        <position position="302"/>
    </location>
</feature>
<feature type="modified residue" description="Phosphotyrosine" evidence="26">
    <location>
        <position position="308"/>
    </location>
</feature>
<feature type="modified residue" description="Phosphoserine" evidence="5 23 24 25 27">
    <location>
        <position position="365"/>
    </location>
</feature>
<feature type="modified residue" description="Phosphoserine" evidence="5 23 24 25 27">
    <location>
        <position position="366"/>
    </location>
</feature>
<feature type="modified residue" description="Phosphoserine" evidence="27">
    <location>
        <position position="379"/>
    </location>
</feature>
<feature type="modified residue" description="Phosphoserine" evidence="24 25 27">
    <location>
        <position position="387"/>
    </location>
</feature>
<feature type="modified residue" description="Phosphoserine" evidence="24 25 27">
    <location>
        <position position="389"/>
    </location>
</feature>
<feature type="cross-link" description="Glycyl lysine isopeptide (Lys-Gly) (interchain with G-Cter in SUMO2)" evidence="29 30">
    <location>
        <position position="116"/>
    </location>
</feature>
<feature type="cross-link" description="Glycyl lysine isopeptide (Lys-Gly) (interchain with G-Cter in SUMO2)" evidence="30">
    <location>
        <position position="122"/>
    </location>
</feature>
<feature type="cross-link" description="Glycyl lysine isopeptide (Lys-Gly) (interchain with G-Cter in SUMO1); alternate" evidence="28">
    <location>
        <position position="161"/>
    </location>
</feature>
<feature type="cross-link" description="Glycyl lysine isopeptide (Lys-Gly) (interchain with G-Cter in SUMO2); alternate" evidence="28 29 30">
    <location>
        <position position="161"/>
    </location>
</feature>
<feature type="cross-link" description="Glycyl lysine isopeptide (Lys-Gly) (interchain with G-Cter in SUMO2)" evidence="30">
    <location>
        <position position="165"/>
    </location>
</feature>
<feature type="cross-link" description="Glycyl lysine isopeptide (Lys-Gly) (interchain with G-Cter in SUMO2)" evidence="30">
    <location>
        <position position="170"/>
    </location>
</feature>
<feature type="cross-link" description="Glycyl lysine isopeptide (Lys-Gly) (interchain with G-Cter in SUMO2)" evidence="30">
    <location>
        <position position="326"/>
    </location>
</feature>
<feature type="splice variant" id="VSP_051624" description="In isoform 3." evidence="15">
    <original>MEDPTLYIVERPLPGYPDAEAPEPSSAGAQAAEEPSGAGSEELIKSDQVNGVLVLSLLDKIIGAVDQIQLTQAQLEERQAEMEGAVQSIQGELSKLGKAHATTSNTVSKLLEKVRKVSVNVKTVRGSLERQAGQIKKLEVNEAELLRRRNFKVMIYQDEVKLPAKLSISKSLKESEALPEKEGEELGEGERPE</original>
    <variation>M</variation>
    <location>
        <begin position="1"/>
        <end position="193"/>
    </location>
</feature>
<feature type="splice variant" id="VSP_051625" description="In isoform 2." evidence="15">
    <location>
        <begin position="96"/>
        <end position="185"/>
    </location>
</feature>
<feature type="sequence variant" id="VAR_035982" description="In a breast cancer sample; somatic mutation." evidence="6">
    <original>P</original>
    <variation>T</variation>
    <location>
        <position position="14"/>
    </location>
</feature>
<feature type="sequence variant" id="VAR_034416" description="In dbSNP:rs35308568.">
    <original>E</original>
    <variation>Q</variation>
    <location>
        <position position="193"/>
    </location>
</feature>
<feature type="sequence conflict" description="In Ref. 6; AA sequence." evidence="16" ref="6">
    <original>D</original>
    <variation>V</variation>
    <location>
        <position position="47"/>
    </location>
</feature>
<feature type="sequence conflict" description="In Ref. 6; AA sequence." evidence="16" ref="6">
    <original>I</original>
    <variation>L</variation>
    <location>
        <position position="213"/>
    </location>
</feature>
<feature type="sequence conflict" description="In Ref. 1; AAG27093." evidence="16" ref="1">
    <original>E</original>
    <variation>K</variation>
    <location>
        <position position="219"/>
    </location>
</feature>
<feature type="helix" evidence="31">
    <location>
        <begin position="57"/>
        <end position="94"/>
    </location>
</feature>
<name>CAVN1_HUMAN</name>
<sequence>MEDPTLYIVERPLPGYPDAEAPEPSSAGAQAAEEPSGAGSEELIKSDQVNGVLVLSLLDKIIGAVDQIQLTQAQLEERQAEMEGAVQSIQGELSKLGKAHATTSNTVSKLLEKVRKVSVNVKTVRGSLERQAGQIKKLEVNEAELLRRRNFKVMIYQDEVKLPAKLSISKSLKESEALPEKEGEELGEGERPEEDAAALELSSDEAVEVEEVIEESRAERIKRSGLRRVDDFKKAFSKEKMEKTKVRTRENLEKTRLKTKENLEKTRHTLEKRMNKLGTRLVPAERREKLKTSRDKLRKSFTPDHVVYARSKTAVYKVPPFTFHVKKIREGQVEVLKATEMVEVGADDDEGGAERGEAGDLRRGSSPDVHALLEITEESDAVLVDKSDSD</sequence>
<organism>
    <name type="scientific">Homo sapiens</name>
    <name type="common">Human</name>
    <dbReference type="NCBI Taxonomy" id="9606"/>
    <lineage>
        <taxon>Eukaryota</taxon>
        <taxon>Metazoa</taxon>
        <taxon>Chordata</taxon>
        <taxon>Craniata</taxon>
        <taxon>Vertebrata</taxon>
        <taxon>Euteleostomi</taxon>
        <taxon>Mammalia</taxon>
        <taxon>Eutheria</taxon>
        <taxon>Euarchontoglires</taxon>
        <taxon>Primates</taxon>
        <taxon>Haplorrhini</taxon>
        <taxon>Catarrhini</taxon>
        <taxon>Hominidae</taxon>
        <taxon>Homo</taxon>
    </lineage>
</organism>
<dbReference type="EMBL" id="AF312393">
    <property type="protein sequence ID" value="AAG27093.1"/>
    <property type="molecule type" value="mRNA"/>
</dbReference>
<dbReference type="EMBL" id="AK314389">
    <property type="protein sequence ID" value="BAG37014.1"/>
    <property type="molecule type" value="mRNA"/>
</dbReference>
<dbReference type="EMBL" id="CH471152">
    <property type="protein sequence ID" value="EAW60828.1"/>
    <property type="molecule type" value="Genomic_DNA"/>
</dbReference>
<dbReference type="EMBL" id="BC004295">
    <property type="protein sequence ID" value="AAH04295.1"/>
    <property type="molecule type" value="mRNA"/>
</dbReference>
<dbReference type="EMBL" id="BC008849">
    <property type="protein sequence ID" value="AAH08849.1"/>
    <property type="molecule type" value="mRNA"/>
</dbReference>
<dbReference type="EMBL" id="BC066123">
    <property type="protein sequence ID" value="AAH66123.1"/>
    <property type="molecule type" value="mRNA"/>
</dbReference>
<dbReference type="EMBL" id="BC073759">
    <property type="protein sequence ID" value="AAH73759.1"/>
    <property type="molecule type" value="mRNA"/>
</dbReference>
<dbReference type="EMBL" id="AF000421">
    <property type="protein sequence ID" value="AAC63404.1"/>
    <property type="molecule type" value="mRNA"/>
</dbReference>
<dbReference type="CCDS" id="CCDS11425.1">
    <molecule id="Q6NZI2-1"/>
</dbReference>
<dbReference type="RefSeq" id="NP_036364.2">
    <molecule id="Q6NZI2-1"/>
    <property type="nucleotide sequence ID" value="NM_012232.5"/>
</dbReference>
<dbReference type="PDB" id="9EG6">
    <property type="method" value="X-ray"/>
    <property type="resolution" value="3.20 A"/>
    <property type="chains" value="A/C/E=43-152"/>
</dbReference>
<dbReference type="PDB" id="9EGN">
    <property type="method" value="X-ray"/>
    <property type="resolution" value="1.57 A"/>
    <property type="chains" value="A=43-152"/>
</dbReference>
<dbReference type="PDB" id="9EIU">
    <property type="method" value="X-ray"/>
    <property type="resolution" value="4.00 A"/>
    <property type="chains" value="A=43-152"/>
</dbReference>
<dbReference type="PDBsum" id="9EG6"/>
<dbReference type="PDBsum" id="9EGN"/>
<dbReference type="PDBsum" id="9EIU"/>
<dbReference type="SMR" id="Q6NZI2"/>
<dbReference type="BioGRID" id="129767">
    <property type="interactions" value="312"/>
</dbReference>
<dbReference type="CORUM" id="Q6NZI2"/>
<dbReference type="DIP" id="DIP-48550N"/>
<dbReference type="ELM" id="Q6NZI2"/>
<dbReference type="FunCoup" id="Q6NZI2">
    <property type="interactions" value="1362"/>
</dbReference>
<dbReference type="IntAct" id="Q6NZI2">
    <property type="interactions" value="137"/>
</dbReference>
<dbReference type="MINT" id="Q6NZI2"/>
<dbReference type="STRING" id="9606.ENSP00000349541"/>
<dbReference type="GlyGen" id="Q6NZI2">
    <property type="glycosylation" value="1 site, 1 O-linked glycan (1 site)"/>
</dbReference>
<dbReference type="iPTMnet" id="Q6NZI2"/>
<dbReference type="MetOSite" id="Q6NZI2"/>
<dbReference type="PhosphoSitePlus" id="Q6NZI2"/>
<dbReference type="SwissPalm" id="Q6NZI2"/>
<dbReference type="BioMuta" id="CAVIN1"/>
<dbReference type="DMDM" id="56749614"/>
<dbReference type="jPOST" id="Q6NZI2"/>
<dbReference type="MassIVE" id="Q6NZI2"/>
<dbReference type="PaxDb" id="9606-ENSP00000349541"/>
<dbReference type="PeptideAtlas" id="Q6NZI2"/>
<dbReference type="ProteomicsDB" id="66794">
    <molecule id="Q6NZI2-1"/>
</dbReference>
<dbReference type="ProteomicsDB" id="66795">
    <molecule id="Q6NZI2-2"/>
</dbReference>
<dbReference type="ProteomicsDB" id="66796">
    <molecule id="Q6NZI2-3"/>
</dbReference>
<dbReference type="Pumba" id="Q6NZI2"/>
<dbReference type="Antibodypedia" id="29228">
    <property type="antibodies" value="235 antibodies from 34 providers"/>
</dbReference>
<dbReference type="DNASU" id="284119"/>
<dbReference type="Ensembl" id="ENST00000357037.6">
    <molecule id="Q6NZI2-1"/>
    <property type="protein sequence ID" value="ENSP00000349541.4"/>
    <property type="gene ID" value="ENSG00000177469.13"/>
</dbReference>
<dbReference type="GeneID" id="284119"/>
<dbReference type="KEGG" id="hsa:284119"/>
<dbReference type="MANE-Select" id="ENST00000357037.6">
    <property type="protein sequence ID" value="ENSP00000349541.4"/>
    <property type="RefSeq nucleotide sequence ID" value="NM_012232.6"/>
    <property type="RefSeq protein sequence ID" value="NP_036364.2"/>
</dbReference>
<dbReference type="UCSC" id="uc002hzo.4">
    <molecule id="Q6NZI2-1"/>
    <property type="organism name" value="human"/>
</dbReference>
<dbReference type="AGR" id="HGNC:9688"/>
<dbReference type="CTD" id="284119"/>
<dbReference type="DisGeNET" id="284119"/>
<dbReference type="GeneCards" id="CAVIN1"/>
<dbReference type="HGNC" id="HGNC:9688">
    <property type="gene designation" value="CAVIN1"/>
</dbReference>
<dbReference type="HPA" id="ENSG00000177469">
    <property type="expression patterns" value="Low tissue specificity"/>
</dbReference>
<dbReference type="MalaCards" id="CAVIN1"/>
<dbReference type="MIM" id="603198">
    <property type="type" value="gene"/>
</dbReference>
<dbReference type="MIM" id="613327">
    <property type="type" value="phenotype"/>
</dbReference>
<dbReference type="neXtProt" id="NX_Q6NZI2"/>
<dbReference type="OpenTargets" id="ENSG00000177469"/>
<dbReference type="Orphanet" id="528">
    <property type="disease" value="Congenital generalized lipodystrophy"/>
</dbReference>
<dbReference type="PharmGKB" id="PA34031"/>
<dbReference type="VEuPathDB" id="HostDB:ENSG00000177469"/>
<dbReference type="eggNOG" id="ENOG502QV3D">
    <property type="taxonomic scope" value="Eukaryota"/>
</dbReference>
<dbReference type="GeneTree" id="ENSGT00950000182910"/>
<dbReference type="HOGENOM" id="CLU_039470_0_0_1"/>
<dbReference type="InParanoid" id="Q6NZI2"/>
<dbReference type="OMA" id="IGTHISV"/>
<dbReference type="OrthoDB" id="8951679at2759"/>
<dbReference type="PAN-GO" id="Q6NZI2">
    <property type="GO annotations" value="5 GO annotations based on evolutionary models"/>
</dbReference>
<dbReference type="PhylomeDB" id="Q6NZI2"/>
<dbReference type="TreeFam" id="TF331031"/>
<dbReference type="PathwayCommons" id="Q6NZI2"/>
<dbReference type="Reactome" id="R-HSA-73863">
    <property type="pathway name" value="RNA Polymerase I Transcription Termination"/>
</dbReference>
<dbReference type="Reactome" id="R-HSA-8980692">
    <property type="pathway name" value="RHOA GTPase cycle"/>
</dbReference>
<dbReference type="Reactome" id="R-HSA-9013026">
    <property type="pathway name" value="RHOB GTPase cycle"/>
</dbReference>
<dbReference type="Reactome" id="R-HSA-9013106">
    <property type="pathway name" value="RHOC GTPase cycle"/>
</dbReference>
<dbReference type="SignaLink" id="Q6NZI2"/>
<dbReference type="BioGRID-ORCS" id="284119">
    <property type="hits" value="15 hits in 1168 CRISPR screens"/>
</dbReference>
<dbReference type="CD-CODE" id="86739B61">
    <property type="entry name" value="Synthetic Condensate 000279"/>
</dbReference>
<dbReference type="ChiTaRS" id="PTRF">
    <property type="organism name" value="human"/>
</dbReference>
<dbReference type="GeneWiki" id="PTRF"/>
<dbReference type="GenomeRNAi" id="284119"/>
<dbReference type="Pharos" id="Q6NZI2">
    <property type="development level" value="Tbio"/>
</dbReference>
<dbReference type="PRO" id="PR:Q6NZI2"/>
<dbReference type="Proteomes" id="UP000005640">
    <property type="component" value="Chromosome 17"/>
</dbReference>
<dbReference type="RNAct" id="Q6NZI2">
    <property type="molecule type" value="protein"/>
</dbReference>
<dbReference type="Bgee" id="ENSG00000177469">
    <property type="expression patterns" value="Expressed in right coronary artery and 201 other cell types or tissues"/>
</dbReference>
<dbReference type="GO" id="GO:0005901">
    <property type="term" value="C:caveola"/>
    <property type="evidence" value="ECO:0000314"/>
    <property type="project" value="UniProtKB"/>
</dbReference>
<dbReference type="GO" id="GO:0005737">
    <property type="term" value="C:cytoplasm"/>
    <property type="evidence" value="ECO:0000314"/>
    <property type="project" value="UniProtKB"/>
</dbReference>
<dbReference type="GO" id="GO:0005829">
    <property type="term" value="C:cytosol"/>
    <property type="evidence" value="ECO:0007669"/>
    <property type="project" value="UniProtKB-SubCell"/>
</dbReference>
<dbReference type="GO" id="GO:0005783">
    <property type="term" value="C:endoplasmic reticulum"/>
    <property type="evidence" value="ECO:0007669"/>
    <property type="project" value="UniProtKB-SubCell"/>
</dbReference>
<dbReference type="GO" id="GO:0043231">
    <property type="term" value="C:intracellular membrane-bounded organelle"/>
    <property type="evidence" value="ECO:0000314"/>
    <property type="project" value="HPA"/>
</dbReference>
<dbReference type="GO" id="GO:0045121">
    <property type="term" value="C:membrane raft"/>
    <property type="evidence" value="ECO:0000314"/>
    <property type="project" value="UniProtKB"/>
</dbReference>
<dbReference type="GO" id="GO:0005739">
    <property type="term" value="C:mitochondrion"/>
    <property type="evidence" value="ECO:0000314"/>
    <property type="project" value="UniProtKB"/>
</dbReference>
<dbReference type="GO" id="GO:0005654">
    <property type="term" value="C:nucleoplasm"/>
    <property type="evidence" value="ECO:0000304"/>
    <property type="project" value="Reactome"/>
</dbReference>
<dbReference type="GO" id="GO:0005634">
    <property type="term" value="C:nucleus"/>
    <property type="evidence" value="ECO:0000314"/>
    <property type="project" value="UniProtKB"/>
</dbReference>
<dbReference type="GO" id="GO:0005886">
    <property type="term" value="C:plasma membrane"/>
    <property type="evidence" value="ECO:0000314"/>
    <property type="project" value="HPA"/>
</dbReference>
<dbReference type="GO" id="GO:0032991">
    <property type="term" value="C:protein-containing complex"/>
    <property type="evidence" value="ECO:0000314"/>
    <property type="project" value="MGI"/>
</dbReference>
<dbReference type="GO" id="GO:0042802">
    <property type="term" value="F:identical protein binding"/>
    <property type="evidence" value="ECO:0000353"/>
    <property type="project" value="IntAct"/>
</dbReference>
<dbReference type="GO" id="GO:0003723">
    <property type="term" value="F:RNA binding"/>
    <property type="evidence" value="ECO:0007005"/>
    <property type="project" value="UniProtKB"/>
</dbReference>
<dbReference type="GO" id="GO:0042134">
    <property type="term" value="F:rRNA primary transcript binding"/>
    <property type="evidence" value="ECO:0000314"/>
    <property type="project" value="UniProtKB"/>
</dbReference>
<dbReference type="GO" id="GO:2000147">
    <property type="term" value="P:positive regulation of cell motility"/>
    <property type="evidence" value="ECO:0000250"/>
    <property type="project" value="UniProtKB"/>
</dbReference>
<dbReference type="GO" id="GO:0009306">
    <property type="term" value="P:protein secretion"/>
    <property type="evidence" value="ECO:0007669"/>
    <property type="project" value="Ensembl"/>
</dbReference>
<dbReference type="GO" id="GO:0009303">
    <property type="term" value="P:rRNA transcription"/>
    <property type="evidence" value="ECO:0000250"/>
    <property type="project" value="UniProtKB"/>
</dbReference>
<dbReference type="GO" id="GO:0006363">
    <property type="term" value="P:termination of RNA polymerase I transcription"/>
    <property type="evidence" value="ECO:0000314"/>
    <property type="project" value="UniProtKB"/>
</dbReference>
<dbReference type="GO" id="GO:0006361">
    <property type="term" value="P:transcription initiation at RNA polymerase I promoter"/>
    <property type="evidence" value="ECO:0000314"/>
    <property type="project" value="UniProtKB"/>
</dbReference>
<dbReference type="InterPro" id="IPR026752">
    <property type="entry name" value="Cavin_fam"/>
</dbReference>
<dbReference type="PANTHER" id="PTHR15240:SF3">
    <property type="entry name" value="CAVEOLAE-ASSOCIATED PROTEIN 1"/>
    <property type="match status" value="1"/>
</dbReference>
<dbReference type="PANTHER" id="PTHR15240">
    <property type="entry name" value="CAVIN"/>
    <property type="match status" value="1"/>
</dbReference>
<dbReference type="Pfam" id="PF15237">
    <property type="entry name" value="PTRF_SDPR"/>
    <property type="match status" value="1"/>
</dbReference>